<dbReference type="EC" id="2.7.1.16" evidence="1"/>
<dbReference type="EMBL" id="CP000029">
    <property type="protein sequence ID" value="AAW55269.1"/>
    <property type="molecule type" value="Genomic_DNA"/>
</dbReference>
<dbReference type="RefSeq" id="WP_002438418.1">
    <property type="nucleotide sequence ID" value="NC_002976.3"/>
</dbReference>
<dbReference type="SMR" id="Q5HLQ6"/>
<dbReference type="STRING" id="176279.SERP1927"/>
<dbReference type="KEGG" id="ser:SERP1927"/>
<dbReference type="eggNOG" id="COG1069">
    <property type="taxonomic scope" value="Bacteria"/>
</dbReference>
<dbReference type="HOGENOM" id="CLU_009281_9_1_9"/>
<dbReference type="UniPathway" id="UPA00145">
    <property type="reaction ID" value="UER00566"/>
</dbReference>
<dbReference type="Proteomes" id="UP000000531">
    <property type="component" value="Chromosome"/>
</dbReference>
<dbReference type="GO" id="GO:0005737">
    <property type="term" value="C:cytoplasm"/>
    <property type="evidence" value="ECO:0007669"/>
    <property type="project" value="TreeGrafter"/>
</dbReference>
<dbReference type="GO" id="GO:0005524">
    <property type="term" value="F:ATP binding"/>
    <property type="evidence" value="ECO:0007669"/>
    <property type="project" value="UniProtKB-KW"/>
</dbReference>
<dbReference type="GO" id="GO:0019150">
    <property type="term" value="F:D-ribulokinase activity"/>
    <property type="evidence" value="ECO:0007669"/>
    <property type="project" value="RHEA"/>
</dbReference>
<dbReference type="GO" id="GO:0008741">
    <property type="term" value="F:ribulokinase activity"/>
    <property type="evidence" value="ECO:0007669"/>
    <property type="project" value="UniProtKB-UniRule"/>
</dbReference>
<dbReference type="GO" id="GO:0019569">
    <property type="term" value="P:L-arabinose catabolic process to xylulose 5-phosphate"/>
    <property type="evidence" value="ECO:0007669"/>
    <property type="project" value="UniProtKB-UniRule"/>
</dbReference>
<dbReference type="CDD" id="cd07781">
    <property type="entry name" value="ASKHA_NBD_FGGY_L-RBK"/>
    <property type="match status" value="1"/>
</dbReference>
<dbReference type="Gene3D" id="3.30.420.40">
    <property type="match status" value="2"/>
</dbReference>
<dbReference type="HAMAP" id="MF_00520">
    <property type="entry name" value="Ribulokinase"/>
    <property type="match status" value="1"/>
</dbReference>
<dbReference type="InterPro" id="IPR043129">
    <property type="entry name" value="ATPase_NBD"/>
</dbReference>
<dbReference type="InterPro" id="IPR000577">
    <property type="entry name" value="Carb_kinase_FGGY"/>
</dbReference>
<dbReference type="InterPro" id="IPR018485">
    <property type="entry name" value="FGGY_C"/>
</dbReference>
<dbReference type="InterPro" id="IPR018484">
    <property type="entry name" value="FGGY_N"/>
</dbReference>
<dbReference type="InterPro" id="IPR005929">
    <property type="entry name" value="Ribulokinase"/>
</dbReference>
<dbReference type="NCBIfam" id="NF003154">
    <property type="entry name" value="PRK04123.1"/>
    <property type="match status" value="1"/>
</dbReference>
<dbReference type="PANTHER" id="PTHR43435:SF4">
    <property type="entry name" value="FGGY CARBOHYDRATE KINASE DOMAIN-CONTAINING PROTEIN"/>
    <property type="match status" value="1"/>
</dbReference>
<dbReference type="PANTHER" id="PTHR43435">
    <property type="entry name" value="RIBULOKINASE"/>
    <property type="match status" value="1"/>
</dbReference>
<dbReference type="Pfam" id="PF02782">
    <property type="entry name" value="FGGY_C"/>
    <property type="match status" value="1"/>
</dbReference>
<dbReference type="Pfam" id="PF00370">
    <property type="entry name" value="FGGY_N"/>
    <property type="match status" value="1"/>
</dbReference>
<dbReference type="PIRSF" id="PIRSF000538">
    <property type="entry name" value="GlpK"/>
    <property type="match status" value="1"/>
</dbReference>
<dbReference type="SUPFAM" id="SSF53067">
    <property type="entry name" value="Actin-like ATPase domain"/>
    <property type="match status" value="2"/>
</dbReference>
<name>ARAB_STAEQ</name>
<reference key="1">
    <citation type="journal article" date="2005" name="J. Bacteriol.">
        <title>Insights on evolution of virulence and resistance from the complete genome analysis of an early methicillin-resistant Staphylococcus aureus strain and a biofilm-producing methicillin-resistant Staphylococcus epidermidis strain.</title>
        <authorList>
            <person name="Gill S.R."/>
            <person name="Fouts D.E."/>
            <person name="Archer G.L."/>
            <person name="Mongodin E.F."/>
            <person name="DeBoy R.T."/>
            <person name="Ravel J."/>
            <person name="Paulsen I.T."/>
            <person name="Kolonay J.F."/>
            <person name="Brinkac L.M."/>
            <person name="Beanan M.J."/>
            <person name="Dodson R.J."/>
            <person name="Daugherty S.C."/>
            <person name="Madupu R."/>
            <person name="Angiuoli S.V."/>
            <person name="Durkin A.S."/>
            <person name="Haft D.H."/>
            <person name="Vamathevan J.J."/>
            <person name="Khouri H."/>
            <person name="Utterback T.R."/>
            <person name="Lee C."/>
            <person name="Dimitrov G."/>
            <person name="Jiang L."/>
            <person name="Qin H."/>
            <person name="Weidman J."/>
            <person name="Tran K."/>
            <person name="Kang K.H."/>
            <person name="Hance I.R."/>
            <person name="Nelson K.E."/>
            <person name="Fraser C.M."/>
        </authorList>
    </citation>
    <scope>NUCLEOTIDE SEQUENCE [LARGE SCALE GENOMIC DNA]</scope>
    <source>
        <strain>ATCC 35984 / DSM 28319 / BCRC 17069 / CCUG 31568 / BM 3577 / RP62A</strain>
    </source>
</reference>
<feature type="chain" id="PRO_0000198373" description="Ribulokinase">
    <location>
        <begin position="1"/>
        <end position="536"/>
    </location>
</feature>
<comment type="catalytic activity">
    <reaction evidence="1">
        <text>D-ribulose + ATP = D-ribulose 5-phosphate + ADP + H(+)</text>
        <dbReference type="Rhea" id="RHEA:17601"/>
        <dbReference type="ChEBI" id="CHEBI:15378"/>
        <dbReference type="ChEBI" id="CHEBI:17173"/>
        <dbReference type="ChEBI" id="CHEBI:30616"/>
        <dbReference type="ChEBI" id="CHEBI:58121"/>
        <dbReference type="ChEBI" id="CHEBI:456216"/>
        <dbReference type="EC" id="2.7.1.16"/>
    </reaction>
</comment>
<comment type="catalytic activity">
    <reaction evidence="1">
        <text>L-ribulose + ATP = L-ribulose 5-phosphate + ADP + H(+)</text>
        <dbReference type="Rhea" id="RHEA:22072"/>
        <dbReference type="ChEBI" id="CHEBI:15378"/>
        <dbReference type="ChEBI" id="CHEBI:16880"/>
        <dbReference type="ChEBI" id="CHEBI:30616"/>
        <dbReference type="ChEBI" id="CHEBI:58226"/>
        <dbReference type="ChEBI" id="CHEBI:456216"/>
        <dbReference type="EC" id="2.7.1.16"/>
    </reaction>
</comment>
<comment type="pathway">
    <text evidence="1">Carbohydrate degradation; L-arabinose degradation via L-ribulose; D-xylulose 5-phosphate from L-arabinose (bacterial route): step 2/3.</text>
</comment>
<comment type="similarity">
    <text evidence="1">Belongs to the ribulokinase family.</text>
</comment>
<proteinExistence type="inferred from homology"/>
<gene>
    <name evidence="1" type="primary">araB</name>
    <name type="ordered locus">SERP1927</name>
</gene>
<evidence type="ECO:0000255" key="1">
    <source>
        <dbReference type="HAMAP-Rule" id="MF_00520"/>
    </source>
</evidence>
<sequence length="536" mass="60092">MSYSIGIDFGTASGRVILADTSNGHIISRYEEDYANGTYMNSLYDKPLPENYFLQNADDYLQILEQGVQFVLEDSKVNKNDVVGIGVDFTSSTIIFLDEQFEPLHRHEDLKTNPHAYVKLWKHHGAQDEANYMIQMSKNKNWLDYYGSSVNSEWMIPKILEVKHEAPEILRRARYIMEAGDYITSILTNSNIRSNCGIGFKGFWDNEAGFNYDFFHSVDPDLPKIVKEKCEAPIISIGESAGRLCKDYQQIWGLSQDVQVSPFIIDAHSGVLGVGAIEAGEFTAVIGTSTCHLMLDSRQVPISSITGSVKNAIIPGLYAYEAGQPAVGDLFEYSKNQAPKHIVDQANEHHMHVLNYLEELASHIRIEEQHVVVLDWLNGNRSILSNSHLTGSIFGLTLQTPYEMIHRAYIEATAFGTKLIMKQFEDNHIPVHTVYASGGIPQKSKLLVEIYANVLNKRVVVIDSSNASALGAAMLGANVGNAYSTLKEAALSMKQPIAYIQEPEIQKVQAYKPLYHKYCELHDLLGRQYPELSYLI</sequence>
<keyword id="KW-0054">Arabinose catabolism</keyword>
<keyword id="KW-0067">ATP-binding</keyword>
<keyword id="KW-0119">Carbohydrate metabolism</keyword>
<keyword id="KW-0418">Kinase</keyword>
<keyword id="KW-0547">Nucleotide-binding</keyword>
<keyword id="KW-1185">Reference proteome</keyword>
<keyword id="KW-0808">Transferase</keyword>
<protein>
    <recommendedName>
        <fullName evidence="1">Ribulokinase</fullName>
        <ecNumber evidence="1">2.7.1.16</ecNumber>
    </recommendedName>
</protein>
<accession>Q5HLQ6</accession>
<organism>
    <name type="scientific">Staphylococcus epidermidis (strain ATCC 35984 / DSM 28319 / BCRC 17069 / CCUG 31568 / BM 3577 / RP62A)</name>
    <dbReference type="NCBI Taxonomy" id="176279"/>
    <lineage>
        <taxon>Bacteria</taxon>
        <taxon>Bacillati</taxon>
        <taxon>Bacillota</taxon>
        <taxon>Bacilli</taxon>
        <taxon>Bacillales</taxon>
        <taxon>Staphylococcaceae</taxon>
        <taxon>Staphylococcus</taxon>
    </lineage>
</organism>